<dbReference type="EMBL" id="X76044">
    <property type="protein sequence ID" value="CAA53629.1"/>
    <property type="molecule type" value="mRNA"/>
</dbReference>
<dbReference type="EMBL" id="AE013599">
    <property type="protein sequence ID" value="AAF58687.1"/>
    <property type="molecule type" value="Genomic_DNA"/>
</dbReference>
<dbReference type="EMBL" id="BT001616">
    <property type="protein sequence ID" value="AAN71371.1"/>
    <property type="molecule type" value="mRNA"/>
</dbReference>
<dbReference type="EMBL" id="BT030769">
    <property type="protein sequence ID" value="ABV82151.1"/>
    <property type="molecule type" value="mRNA"/>
</dbReference>
<dbReference type="PIR" id="S38877">
    <property type="entry name" value="S38877"/>
</dbReference>
<dbReference type="RefSeq" id="NP_001286310.1">
    <property type="nucleotide sequence ID" value="NM_001299381.1"/>
</dbReference>
<dbReference type="RefSeq" id="NP_476968.1">
    <property type="nucleotide sequence ID" value="NM_057620.6"/>
</dbReference>
<dbReference type="SMR" id="P47948"/>
<dbReference type="BioGRID" id="61991">
    <property type="interactions" value="4"/>
</dbReference>
<dbReference type="IntAct" id="P47948">
    <property type="interactions" value="19"/>
</dbReference>
<dbReference type="STRING" id="7227.FBpp0311639"/>
<dbReference type="PaxDb" id="7227-FBpp0087280"/>
<dbReference type="DNASU" id="36195"/>
<dbReference type="EnsemblMetazoa" id="FBtr0088184">
    <property type="protein sequence ID" value="FBpp0087280"/>
    <property type="gene ID" value="FBgn0010423"/>
</dbReference>
<dbReference type="EnsemblMetazoa" id="FBtr0345540">
    <property type="protein sequence ID" value="FBpp0311639"/>
    <property type="gene ID" value="FBgn0010423"/>
</dbReference>
<dbReference type="GeneID" id="36195"/>
<dbReference type="KEGG" id="dme:Dmel_CG9073"/>
<dbReference type="AGR" id="FB:FBgn0010423"/>
<dbReference type="CTD" id="36195"/>
<dbReference type="FlyBase" id="FBgn0010423">
    <property type="gene designation" value="TpnC47D"/>
</dbReference>
<dbReference type="VEuPathDB" id="VectorBase:FBgn0010423"/>
<dbReference type="eggNOG" id="KOG0027">
    <property type="taxonomic scope" value="Eukaryota"/>
</dbReference>
<dbReference type="GeneTree" id="ENSGT00940000170122"/>
<dbReference type="HOGENOM" id="CLU_061288_2_4_1"/>
<dbReference type="InParanoid" id="P47948"/>
<dbReference type="OMA" id="LQCDGQK"/>
<dbReference type="OrthoDB" id="26525at2759"/>
<dbReference type="PhylomeDB" id="P47948"/>
<dbReference type="BioGRID-ORCS" id="36195">
    <property type="hits" value="0 hits in 1 CRISPR screen"/>
</dbReference>
<dbReference type="GenomeRNAi" id="36195"/>
<dbReference type="PRO" id="PR:P47948"/>
<dbReference type="Proteomes" id="UP000000803">
    <property type="component" value="Chromosome 2R"/>
</dbReference>
<dbReference type="Bgee" id="FBgn0010423">
    <property type="expression patterns" value="Expressed in crop (Drosophila) and 47 other cell types or tissues"/>
</dbReference>
<dbReference type="ExpressionAtlas" id="P47948">
    <property type="expression patterns" value="baseline and differential"/>
</dbReference>
<dbReference type="GO" id="GO:0005813">
    <property type="term" value="C:centrosome"/>
    <property type="evidence" value="ECO:0000318"/>
    <property type="project" value="GO_Central"/>
</dbReference>
<dbReference type="GO" id="GO:0005737">
    <property type="term" value="C:cytoplasm"/>
    <property type="evidence" value="ECO:0000318"/>
    <property type="project" value="GO_Central"/>
</dbReference>
<dbReference type="GO" id="GO:0005509">
    <property type="term" value="F:calcium ion binding"/>
    <property type="evidence" value="ECO:0000318"/>
    <property type="project" value="GO_Central"/>
</dbReference>
<dbReference type="CDD" id="cd00051">
    <property type="entry name" value="EFh"/>
    <property type="match status" value="1"/>
</dbReference>
<dbReference type="FunFam" id="1.10.238.10:FF:000177">
    <property type="entry name" value="Troponin C Ia"/>
    <property type="match status" value="1"/>
</dbReference>
<dbReference type="FunFam" id="1.10.238.10:FF:000103">
    <property type="entry name" value="Troponin C Ib"/>
    <property type="match status" value="1"/>
</dbReference>
<dbReference type="Gene3D" id="1.10.238.10">
    <property type="entry name" value="EF-hand"/>
    <property type="match status" value="2"/>
</dbReference>
<dbReference type="InterPro" id="IPR050230">
    <property type="entry name" value="CALM/Myosin/TropC-like"/>
</dbReference>
<dbReference type="InterPro" id="IPR011992">
    <property type="entry name" value="EF-hand-dom_pair"/>
</dbReference>
<dbReference type="InterPro" id="IPR018247">
    <property type="entry name" value="EF_Hand_1_Ca_BS"/>
</dbReference>
<dbReference type="InterPro" id="IPR002048">
    <property type="entry name" value="EF_hand_dom"/>
</dbReference>
<dbReference type="PANTHER" id="PTHR23048">
    <property type="entry name" value="MYOSIN LIGHT CHAIN 1, 3"/>
    <property type="match status" value="1"/>
</dbReference>
<dbReference type="PANTHER" id="PTHR23048:SF46">
    <property type="entry name" value="TROPONIN C-LIKE ISOFORM X1"/>
    <property type="match status" value="1"/>
</dbReference>
<dbReference type="Pfam" id="PF13499">
    <property type="entry name" value="EF-hand_7"/>
    <property type="match status" value="2"/>
</dbReference>
<dbReference type="SMART" id="SM00054">
    <property type="entry name" value="EFh"/>
    <property type="match status" value="4"/>
</dbReference>
<dbReference type="SUPFAM" id="SSF47473">
    <property type="entry name" value="EF-hand"/>
    <property type="match status" value="1"/>
</dbReference>
<dbReference type="PROSITE" id="PS00018">
    <property type="entry name" value="EF_HAND_1"/>
    <property type="match status" value="2"/>
</dbReference>
<dbReference type="PROSITE" id="PS50222">
    <property type="entry name" value="EF_HAND_2"/>
    <property type="match status" value="4"/>
</dbReference>
<accession>P47948</accession>
<accession>A8E6H7</accession>
<accession>Q8IGT2</accession>
<accession>Q9V5V9</accession>
<reference key="1">
    <citation type="journal article" date="1994" name="Biochem. Genet.">
        <title>Drosophila melanogaster genes encoding three troponin-C isoforms and a calmodulin-related protein.</title>
        <authorList>
            <person name="Fyrberg C."/>
            <person name="Parker H."/>
            <person name="Hutchison B."/>
            <person name="Fyrberg E.A."/>
        </authorList>
    </citation>
    <scope>NUCLEOTIDE SEQUENCE [MRNA]</scope>
    <scope>TISSUE SPECIFICITY</scope>
</reference>
<reference key="2">
    <citation type="journal article" date="2000" name="Science">
        <title>The genome sequence of Drosophila melanogaster.</title>
        <authorList>
            <person name="Adams M.D."/>
            <person name="Celniker S.E."/>
            <person name="Holt R.A."/>
            <person name="Evans C.A."/>
            <person name="Gocayne J.D."/>
            <person name="Amanatides P.G."/>
            <person name="Scherer S.E."/>
            <person name="Li P.W."/>
            <person name="Hoskins R.A."/>
            <person name="Galle R.F."/>
            <person name="George R.A."/>
            <person name="Lewis S.E."/>
            <person name="Richards S."/>
            <person name="Ashburner M."/>
            <person name="Henderson S.N."/>
            <person name="Sutton G.G."/>
            <person name="Wortman J.R."/>
            <person name="Yandell M.D."/>
            <person name="Zhang Q."/>
            <person name="Chen L.X."/>
            <person name="Brandon R.C."/>
            <person name="Rogers Y.-H.C."/>
            <person name="Blazej R.G."/>
            <person name="Champe M."/>
            <person name="Pfeiffer B.D."/>
            <person name="Wan K.H."/>
            <person name="Doyle C."/>
            <person name="Baxter E.G."/>
            <person name="Helt G."/>
            <person name="Nelson C.R."/>
            <person name="Miklos G.L.G."/>
            <person name="Abril J.F."/>
            <person name="Agbayani A."/>
            <person name="An H.-J."/>
            <person name="Andrews-Pfannkoch C."/>
            <person name="Baldwin D."/>
            <person name="Ballew R.M."/>
            <person name="Basu A."/>
            <person name="Baxendale J."/>
            <person name="Bayraktaroglu L."/>
            <person name="Beasley E.M."/>
            <person name="Beeson K.Y."/>
            <person name="Benos P.V."/>
            <person name="Berman B.P."/>
            <person name="Bhandari D."/>
            <person name="Bolshakov S."/>
            <person name="Borkova D."/>
            <person name="Botchan M.R."/>
            <person name="Bouck J."/>
            <person name="Brokstein P."/>
            <person name="Brottier P."/>
            <person name="Burtis K.C."/>
            <person name="Busam D.A."/>
            <person name="Butler H."/>
            <person name="Cadieu E."/>
            <person name="Center A."/>
            <person name="Chandra I."/>
            <person name="Cherry J.M."/>
            <person name="Cawley S."/>
            <person name="Dahlke C."/>
            <person name="Davenport L.B."/>
            <person name="Davies P."/>
            <person name="de Pablos B."/>
            <person name="Delcher A."/>
            <person name="Deng Z."/>
            <person name="Mays A.D."/>
            <person name="Dew I."/>
            <person name="Dietz S.M."/>
            <person name="Dodson K."/>
            <person name="Doup L.E."/>
            <person name="Downes M."/>
            <person name="Dugan-Rocha S."/>
            <person name="Dunkov B.C."/>
            <person name="Dunn P."/>
            <person name="Durbin K.J."/>
            <person name="Evangelista C.C."/>
            <person name="Ferraz C."/>
            <person name="Ferriera S."/>
            <person name="Fleischmann W."/>
            <person name="Fosler C."/>
            <person name="Gabrielian A.E."/>
            <person name="Garg N.S."/>
            <person name="Gelbart W.M."/>
            <person name="Glasser K."/>
            <person name="Glodek A."/>
            <person name="Gong F."/>
            <person name="Gorrell J.H."/>
            <person name="Gu Z."/>
            <person name="Guan P."/>
            <person name="Harris M."/>
            <person name="Harris N.L."/>
            <person name="Harvey D.A."/>
            <person name="Heiman T.J."/>
            <person name="Hernandez J.R."/>
            <person name="Houck J."/>
            <person name="Hostin D."/>
            <person name="Houston K.A."/>
            <person name="Howland T.J."/>
            <person name="Wei M.-H."/>
            <person name="Ibegwam C."/>
            <person name="Jalali M."/>
            <person name="Kalush F."/>
            <person name="Karpen G.H."/>
            <person name="Ke Z."/>
            <person name="Kennison J.A."/>
            <person name="Ketchum K.A."/>
            <person name="Kimmel B.E."/>
            <person name="Kodira C.D."/>
            <person name="Kraft C.L."/>
            <person name="Kravitz S."/>
            <person name="Kulp D."/>
            <person name="Lai Z."/>
            <person name="Lasko P."/>
            <person name="Lei Y."/>
            <person name="Levitsky A.A."/>
            <person name="Li J.H."/>
            <person name="Li Z."/>
            <person name="Liang Y."/>
            <person name="Lin X."/>
            <person name="Liu X."/>
            <person name="Mattei B."/>
            <person name="McIntosh T.C."/>
            <person name="McLeod M.P."/>
            <person name="McPherson D."/>
            <person name="Merkulov G."/>
            <person name="Milshina N.V."/>
            <person name="Mobarry C."/>
            <person name="Morris J."/>
            <person name="Moshrefi A."/>
            <person name="Mount S.M."/>
            <person name="Moy M."/>
            <person name="Murphy B."/>
            <person name="Murphy L."/>
            <person name="Muzny D.M."/>
            <person name="Nelson D.L."/>
            <person name="Nelson D.R."/>
            <person name="Nelson K.A."/>
            <person name="Nixon K."/>
            <person name="Nusskern D.R."/>
            <person name="Pacleb J.M."/>
            <person name="Palazzolo M."/>
            <person name="Pittman G.S."/>
            <person name="Pan S."/>
            <person name="Pollard J."/>
            <person name="Puri V."/>
            <person name="Reese M.G."/>
            <person name="Reinert K."/>
            <person name="Remington K."/>
            <person name="Saunders R.D.C."/>
            <person name="Scheeler F."/>
            <person name="Shen H."/>
            <person name="Shue B.C."/>
            <person name="Siden-Kiamos I."/>
            <person name="Simpson M."/>
            <person name="Skupski M.P."/>
            <person name="Smith T.J."/>
            <person name="Spier E."/>
            <person name="Spradling A.C."/>
            <person name="Stapleton M."/>
            <person name="Strong R."/>
            <person name="Sun E."/>
            <person name="Svirskas R."/>
            <person name="Tector C."/>
            <person name="Turner R."/>
            <person name="Venter E."/>
            <person name="Wang A.H."/>
            <person name="Wang X."/>
            <person name="Wang Z.-Y."/>
            <person name="Wassarman D.A."/>
            <person name="Weinstock G.M."/>
            <person name="Weissenbach J."/>
            <person name="Williams S.M."/>
            <person name="Woodage T."/>
            <person name="Worley K.C."/>
            <person name="Wu D."/>
            <person name="Yang S."/>
            <person name="Yao Q.A."/>
            <person name="Ye J."/>
            <person name="Yeh R.-F."/>
            <person name="Zaveri J.S."/>
            <person name="Zhan M."/>
            <person name="Zhang G."/>
            <person name="Zhao Q."/>
            <person name="Zheng L."/>
            <person name="Zheng X.H."/>
            <person name="Zhong F.N."/>
            <person name="Zhong W."/>
            <person name="Zhou X."/>
            <person name="Zhu S.C."/>
            <person name="Zhu X."/>
            <person name="Smith H.O."/>
            <person name="Gibbs R.A."/>
            <person name="Myers E.W."/>
            <person name="Rubin G.M."/>
            <person name="Venter J.C."/>
        </authorList>
    </citation>
    <scope>NUCLEOTIDE SEQUENCE [LARGE SCALE GENOMIC DNA]</scope>
    <source>
        <strain>Berkeley</strain>
    </source>
</reference>
<reference key="3">
    <citation type="journal article" date="2002" name="Genome Biol.">
        <title>Annotation of the Drosophila melanogaster euchromatic genome: a systematic review.</title>
        <authorList>
            <person name="Misra S."/>
            <person name="Crosby M.A."/>
            <person name="Mungall C.J."/>
            <person name="Matthews B.B."/>
            <person name="Campbell K.S."/>
            <person name="Hradecky P."/>
            <person name="Huang Y."/>
            <person name="Kaminker J.S."/>
            <person name="Millburn G.H."/>
            <person name="Prochnik S.E."/>
            <person name="Smith C.D."/>
            <person name="Tupy J.L."/>
            <person name="Whitfield E.J."/>
            <person name="Bayraktaroglu L."/>
            <person name="Berman B.P."/>
            <person name="Bettencourt B.R."/>
            <person name="Celniker S.E."/>
            <person name="de Grey A.D.N.J."/>
            <person name="Drysdale R.A."/>
            <person name="Harris N.L."/>
            <person name="Richter J."/>
            <person name="Russo S."/>
            <person name="Schroeder A.J."/>
            <person name="Shu S.Q."/>
            <person name="Stapleton M."/>
            <person name="Yamada C."/>
            <person name="Ashburner M."/>
            <person name="Gelbart W.M."/>
            <person name="Rubin G.M."/>
            <person name="Lewis S.E."/>
        </authorList>
    </citation>
    <scope>GENOME REANNOTATION</scope>
    <source>
        <strain>Berkeley</strain>
    </source>
</reference>
<reference key="4">
    <citation type="journal article" date="2002" name="Genome Biol.">
        <title>A Drosophila full-length cDNA resource.</title>
        <authorList>
            <person name="Stapleton M."/>
            <person name="Carlson J.W."/>
            <person name="Brokstein P."/>
            <person name="Yu C."/>
            <person name="Champe M."/>
            <person name="George R.A."/>
            <person name="Guarin H."/>
            <person name="Kronmiller B."/>
            <person name="Pacleb J.M."/>
            <person name="Park S."/>
            <person name="Wan K.H."/>
            <person name="Rubin G.M."/>
            <person name="Celniker S.E."/>
        </authorList>
    </citation>
    <scope>NUCLEOTIDE SEQUENCE [LARGE SCALE MRNA]</scope>
    <source>
        <strain>Berkeley</strain>
        <tissue>Embryo</tissue>
    </source>
</reference>
<reference key="5">
    <citation type="submission" date="2007-10" db="EMBL/GenBank/DDBJ databases">
        <authorList>
            <person name="Stapleton M."/>
            <person name="Carlson J.W."/>
            <person name="Frise E."/>
            <person name="Kapadia B."/>
            <person name="Park S."/>
            <person name="Wan K.H."/>
            <person name="Yu C."/>
            <person name="Celniker S.E."/>
        </authorList>
    </citation>
    <scope>NUCLEOTIDE SEQUENCE [LARGE SCALE MRNA]</scope>
    <source>
        <strain>Berkeley</strain>
    </source>
</reference>
<comment type="tissue specificity">
    <text evidence="2">Accumulates almost exclusively in larval muscles.</text>
</comment>
<comment type="similarity">
    <text evidence="3">Belongs to the troponin C family.</text>
</comment>
<gene>
    <name type="primary">TpnC47D</name>
    <name type="synonym">TnC47D</name>
    <name type="ORF">CG9073</name>
</gene>
<protein>
    <recommendedName>
        <fullName>Troponin C, isoform 2</fullName>
    </recommendedName>
</protein>
<name>TNNC2_DROME</name>
<keyword id="KW-0106">Calcium</keyword>
<keyword id="KW-0479">Metal-binding</keyword>
<keyword id="KW-0514">Muscle protein</keyword>
<keyword id="KW-1185">Reference proteome</keyword>
<keyword id="KW-0677">Repeat</keyword>
<proteinExistence type="evidence at transcript level"/>
<organism>
    <name type="scientific">Drosophila melanogaster</name>
    <name type="common">Fruit fly</name>
    <dbReference type="NCBI Taxonomy" id="7227"/>
    <lineage>
        <taxon>Eukaryota</taxon>
        <taxon>Metazoa</taxon>
        <taxon>Ecdysozoa</taxon>
        <taxon>Arthropoda</taxon>
        <taxon>Hexapoda</taxon>
        <taxon>Insecta</taxon>
        <taxon>Pterygota</taxon>
        <taxon>Neoptera</taxon>
        <taxon>Endopterygota</taxon>
        <taxon>Diptera</taxon>
        <taxon>Brachycera</taxon>
        <taxon>Muscomorpha</taxon>
        <taxon>Ephydroidea</taxon>
        <taxon>Drosophilidae</taxon>
        <taxon>Drosophila</taxon>
        <taxon>Sophophora</taxon>
    </lineage>
</organism>
<evidence type="ECO:0000255" key="1">
    <source>
        <dbReference type="PROSITE-ProRule" id="PRU00448"/>
    </source>
</evidence>
<evidence type="ECO:0000269" key="2">
    <source>
    </source>
</evidence>
<evidence type="ECO:0000305" key="3"/>
<sequence length="155" mass="17883">MDNIDEDLTPEQIAVLQKAFNSFDHQKTGSIPTEMVADILRLMGQPFDRQILDELIDEVDEDKSGRLEFEEFVQLAAKFIVEEDDEAMQKELREAFRLYDKQGNGYIPTSCLKEILKELDDQLTEQELDIMIEEIDSDGSGTVDFDEFMEMMTGE</sequence>
<feature type="chain" id="PRO_0000073687" description="Troponin C, isoform 2">
    <location>
        <begin position="1"/>
        <end position="155"/>
    </location>
</feature>
<feature type="domain" description="EF-hand 1" evidence="1">
    <location>
        <begin position="11"/>
        <end position="46"/>
    </location>
</feature>
<feature type="domain" description="EF-hand 2" evidence="1">
    <location>
        <begin position="47"/>
        <end position="82"/>
    </location>
</feature>
<feature type="domain" description="EF-hand 3" evidence="1">
    <location>
        <begin position="87"/>
        <end position="122"/>
    </location>
</feature>
<feature type="domain" description="EF-hand 4" evidence="1">
    <location>
        <begin position="123"/>
        <end position="155"/>
    </location>
</feature>
<feature type="binding site" evidence="1">
    <location>
        <position position="60"/>
    </location>
    <ligand>
        <name>Ca(2+)</name>
        <dbReference type="ChEBI" id="CHEBI:29108"/>
        <label>1</label>
    </ligand>
</feature>
<feature type="binding site" evidence="1">
    <location>
        <position position="62"/>
    </location>
    <ligand>
        <name>Ca(2+)</name>
        <dbReference type="ChEBI" id="CHEBI:29108"/>
        <label>1</label>
    </ligand>
</feature>
<feature type="binding site" evidence="1">
    <location>
        <position position="64"/>
    </location>
    <ligand>
        <name>Ca(2+)</name>
        <dbReference type="ChEBI" id="CHEBI:29108"/>
        <label>1</label>
    </ligand>
</feature>
<feature type="binding site" evidence="1">
    <location>
        <position position="66"/>
    </location>
    <ligand>
        <name>Ca(2+)</name>
        <dbReference type="ChEBI" id="CHEBI:29108"/>
        <label>1</label>
    </ligand>
</feature>
<feature type="binding site" evidence="1">
    <location>
        <position position="71"/>
    </location>
    <ligand>
        <name>Ca(2+)</name>
        <dbReference type="ChEBI" id="CHEBI:29108"/>
        <label>1</label>
    </ligand>
</feature>
<feature type="binding site" evidence="1">
    <location>
        <position position="136"/>
    </location>
    <ligand>
        <name>Ca(2+)</name>
        <dbReference type="ChEBI" id="CHEBI:29108"/>
        <label>2</label>
    </ligand>
</feature>
<feature type="binding site" evidence="1">
    <location>
        <position position="138"/>
    </location>
    <ligand>
        <name>Ca(2+)</name>
        <dbReference type="ChEBI" id="CHEBI:29108"/>
        <label>2</label>
    </ligand>
</feature>
<feature type="binding site" evidence="1">
    <location>
        <position position="140"/>
    </location>
    <ligand>
        <name>Ca(2+)</name>
        <dbReference type="ChEBI" id="CHEBI:29108"/>
        <label>2</label>
    </ligand>
</feature>
<feature type="binding site" evidence="1">
    <location>
        <position position="142"/>
    </location>
    <ligand>
        <name>Ca(2+)</name>
        <dbReference type="ChEBI" id="CHEBI:29108"/>
        <label>2</label>
    </ligand>
</feature>
<feature type="binding site" evidence="1">
    <location>
        <position position="147"/>
    </location>
    <ligand>
        <name>Ca(2+)</name>
        <dbReference type="ChEBI" id="CHEBI:29108"/>
        <label>2</label>
    </ligand>
</feature>
<feature type="sequence conflict" description="In Ref. 1; CAA53629." evidence="3" ref="1">
    <original>ID</original>
    <variation>MH</variation>
    <location>
        <begin position="56"/>
        <end position="57"/>
    </location>
</feature>
<feature type="sequence conflict" description="In Ref. 1; CAA53629." evidence="3" ref="1">
    <original>EL</original>
    <variation>DV</variation>
    <location>
        <begin position="91"/>
        <end position="92"/>
    </location>
</feature>
<feature type="sequence conflict" description="In Ref. 4; AAN71371." evidence="3" ref="4">
    <original>K</original>
    <variation>E</variation>
    <location>
        <position position="101"/>
    </location>
</feature>